<protein>
    <recommendedName>
        <fullName>Intraflagellar transport protein 88 homolog</fullName>
    </recommendedName>
    <alternativeName>
        <fullName>Recessive polycystic kidney disease protein Tg737 homolog</fullName>
    </alternativeName>
    <alternativeName>
        <fullName>Tetratricopeptide repeat protein 10</fullName>
        <shortName>TPR repeat protein 10</shortName>
    </alternativeName>
</protein>
<gene>
    <name type="primary">IFT88</name>
    <name type="synonym">TG737</name>
    <name type="synonym">TTC10</name>
</gene>
<reference key="1">
    <citation type="journal article" date="1995" name="Hum. Mol. Genet.">
        <title>Characterization of the human homologue of the mouse Tg737 candidate polycystic kidney disease gene.</title>
        <authorList>
            <person name="Schrick J.J."/>
            <person name="Onuchic L.F."/>
            <person name="Reeders S.T."/>
            <person name="Korenberg J."/>
            <person name="Chen X.-N."/>
            <person name="Moyer J.H."/>
            <person name="Wilkinson J.E."/>
            <person name="Woychik R.P."/>
        </authorList>
    </citation>
    <scope>NUCLEOTIDE SEQUENCE [MRNA] (ISOFORM 2)</scope>
    <scope>TISSUE SPECIFICITY</scope>
    <scope>VARIANT ASN-446</scope>
    <source>
        <tissue>Liver</tissue>
    </source>
</reference>
<reference key="2">
    <citation type="journal article" date="2004" name="Nat. Genet.">
        <title>Complete sequencing and characterization of 21,243 full-length human cDNAs.</title>
        <authorList>
            <person name="Ota T."/>
            <person name="Suzuki Y."/>
            <person name="Nishikawa T."/>
            <person name="Otsuki T."/>
            <person name="Sugiyama T."/>
            <person name="Irie R."/>
            <person name="Wakamatsu A."/>
            <person name="Hayashi K."/>
            <person name="Sato H."/>
            <person name="Nagai K."/>
            <person name="Kimura K."/>
            <person name="Makita H."/>
            <person name="Sekine M."/>
            <person name="Obayashi M."/>
            <person name="Nishi T."/>
            <person name="Shibahara T."/>
            <person name="Tanaka T."/>
            <person name="Ishii S."/>
            <person name="Yamamoto J."/>
            <person name="Saito K."/>
            <person name="Kawai Y."/>
            <person name="Isono Y."/>
            <person name="Nakamura Y."/>
            <person name="Nagahari K."/>
            <person name="Murakami K."/>
            <person name="Yasuda T."/>
            <person name="Iwayanagi T."/>
            <person name="Wagatsuma M."/>
            <person name="Shiratori A."/>
            <person name="Sudo H."/>
            <person name="Hosoiri T."/>
            <person name="Kaku Y."/>
            <person name="Kodaira H."/>
            <person name="Kondo H."/>
            <person name="Sugawara M."/>
            <person name="Takahashi M."/>
            <person name="Kanda K."/>
            <person name="Yokoi T."/>
            <person name="Furuya T."/>
            <person name="Kikkawa E."/>
            <person name="Omura Y."/>
            <person name="Abe K."/>
            <person name="Kamihara K."/>
            <person name="Katsuta N."/>
            <person name="Sato K."/>
            <person name="Tanikawa M."/>
            <person name="Yamazaki M."/>
            <person name="Ninomiya K."/>
            <person name="Ishibashi T."/>
            <person name="Yamashita H."/>
            <person name="Murakawa K."/>
            <person name="Fujimori K."/>
            <person name="Tanai H."/>
            <person name="Kimata M."/>
            <person name="Watanabe M."/>
            <person name="Hiraoka S."/>
            <person name="Chiba Y."/>
            <person name="Ishida S."/>
            <person name="Ono Y."/>
            <person name="Takiguchi S."/>
            <person name="Watanabe S."/>
            <person name="Yosida M."/>
            <person name="Hotuta T."/>
            <person name="Kusano J."/>
            <person name="Kanehori K."/>
            <person name="Takahashi-Fujii A."/>
            <person name="Hara H."/>
            <person name="Tanase T.-O."/>
            <person name="Nomura Y."/>
            <person name="Togiya S."/>
            <person name="Komai F."/>
            <person name="Hara R."/>
            <person name="Takeuchi K."/>
            <person name="Arita M."/>
            <person name="Imose N."/>
            <person name="Musashino K."/>
            <person name="Yuuki H."/>
            <person name="Oshima A."/>
            <person name="Sasaki N."/>
            <person name="Aotsuka S."/>
            <person name="Yoshikawa Y."/>
            <person name="Matsunawa H."/>
            <person name="Ichihara T."/>
            <person name="Shiohata N."/>
            <person name="Sano S."/>
            <person name="Moriya S."/>
            <person name="Momiyama H."/>
            <person name="Satoh N."/>
            <person name="Takami S."/>
            <person name="Terashima Y."/>
            <person name="Suzuki O."/>
            <person name="Nakagawa S."/>
            <person name="Senoh A."/>
            <person name="Mizoguchi H."/>
            <person name="Goto Y."/>
            <person name="Shimizu F."/>
            <person name="Wakebe H."/>
            <person name="Hishigaki H."/>
            <person name="Watanabe T."/>
            <person name="Sugiyama A."/>
            <person name="Takemoto M."/>
            <person name="Kawakami B."/>
            <person name="Yamazaki M."/>
            <person name="Watanabe K."/>
            <person name="Kumagai A."/>
            <person name="Itakura S."/>
            <person name="Fukuzumi Y."/>
            <person name="Fujimori Y."/>
            <person name="Komiyama M."/>
            <person name="Tashiro H."/>
            <person name="Tanigami A."/>
            <person name="Fujiwara T."/>
            <person name="Ono T."/>
            <person name="Yamada K."/>
            <person name="Fujii Y."/>
            <person name="Ozaki K."/>
            <person name="Hirao M."/>
            <person name="Ohmori Y."/>
            <person name="Kawabata A."/>
            <person name="Hikiji T."/>
            <person name="Kobatake N."/>
            <person name="Inagaki H."/>
            <person name="Ikema Y."/>
            <person name="Okamoto S."/>
            <person name="Okitani R."/>
            <person name="Kawakami T."/>
            <person name="Noguchi S."/>
            <person name="Itoh T."/>
            <person name="Shigeta K."/>
            <person name="Senba T."/>
            <person name="Matsumura K."/>
            <person name="Nakajima Y."/>
            <person name="Mizuno T."/>
            <person name="Morinaga M."/>
            <person name="Sasaki M."/>
            <person name="Togashi T."/>
            <person name="Oyama M."/>
            <person name="Hata H."/>
            <person name="Watanabe M."/>
            <person name="Komatsu T."/>
            <person name="Mizushima-Sugano J."/>
            <person name="Satoh T."/>
            <person name="Shirai Y."/>
            <person name="Takahashi Y."/>
            <person name="Nakagawa K."/>
            <person name="Okumura K."/>
            <person name="Nagase T."/>
            <person name="Nomura N."/>
            <person name="Kikuchi H."/>
            <person name="Masuho Y."/>
            <person name="Yamashita R."/>
            <person name="Nakai K."/>
            <person name="Yada T."/>
            <person name="Nakamura Y."/>
            <person name="Ohara O."/>
            <person name="Isogai T."/>
            <person name="Sugano S."/>
        </authorList>
    </citation>
    <scope>NUCLEOTIDE SEQUENCE [LARGE SCALE MRNA] (ISOFORM 3)</scope>
    <source>
        <tissue>Neuroepithelioma</tissue>
    </source>
</reference>
<reference key="3">
    <citation type="journal article" date="2004" name="Nature">
        <title>The DNA sequence and analysis of human chromosome 13.</title>
        <authorList>
            <person name="Dunham A."/>
            <person name="Matthews L.H."/>
            <person name="Burton J."/>
            <person name="Ashurst J.L."/>
            <person name="Howe K.L."/>
            <person name="Ashcroft K.J."/>
            <person name="Beare D.M."/>
            <person name="Burford D.C."/>
            <person name="Hunt S.E."/>
            <person name="Griffiths-Jones S."/>
            <person name="Jones M.C."/>
            <person name="Keenan S.J."/>
            <person name="Oliver K."/>
            <person name="Scott C.E."/>
            <person name="Ainscough R."/>
            <person name="Almeida J.P."/>
            <person name="Ambrose K.D."/>
            <person name="Andrews D.T."/>
            <person name="Ashwell R.I.S."/>
            <person name="Babbage A.K."/>
            <person name="Bagguley C.L."/>
            <person name="Bailey J."/>
            <person name="Bannerjee R."/>
            <person name="Barlow K.F."/>
            <person name="Bates K."/>
            <person name="Beasley H."/>
            <person name="Bird C.P."/>
            <person name="Bray-Allen S."/>
            <person name="Brown A.J."/>
            <person name="Brown J.Y."/>
            <person name="Burrill W."/>
            <person name="Carder C."/>
            <person name="Carter N.P."/>
            <person name="Chapman J.C."/>
            <person name="Clamp M.E."/>
            <person name="Clark S.Y."/>
            <person name="Clarke G."/>
            <person name="Clee C.M."/>
            <person name="Clegg S.C."/>
            <person name="Cobley V."/>
            <person name="Collins J.E."/>
            <person name="Corby N."/>
            <person name="Coville G.J."/>
            <person name="Deloukas P."/>
            <person name="Dhami P."/>
            <person name="Dunham I."/>
            <person name="Dunn M."/>
            <person name="Earthrowl M.E."/>
            <person name="Ellington A.G."/>
            <person name="Faulkner L."/>
            <person name="Frankish A.G."/>
            <person name="Frankland J."/>
            <person name="French L."/>
            <person name="Garner P."/>
            <person name="Garnett J."/>
            <person name="Gilbert J.G.R."/>
            <person name="Gilson C.J."/>
            <person name="Ghori J."/>
            <person name="Grafham D.V."/>
            <person name="Gribble S.M."/>
            <person name="Griffiths C."/>
            <person name="Hall R.E."/>
            <person name="Hammond S."/>
            <person name="Harley J.L."/>
            <person name="Hart E.A."/>
            <person name="Heath P.D."/>
            <person name="Howden P.J."/>
            <person name="Huckle E.J."/>
            <person name="Hunt P.J."/>
            <person name="Hunt A.R."/>
            <person name="Johnson C."/>
            <person name="Johnson D."/>
            <person name="Kay M."/>
            <person name="Kimberley A.M."/>
            <person name="King A."/>
            <person name="Laird G.K."/>
            <person name="Langford C.J."/>
            <person name="Lawlor S."/>
            <person name="Leongamornlert D.A."/>
            <person name="Lloyd D.M."/>
            <person name="Lloyd C."/>
            <person name="Loveland J.E."/>
            <person name="Lovell J."/>
            <person name="Martin S."/>
            <person name="Mashreghi-Mohammadi M."/>
            <person name="McLaren S.J."/>
            <person name="McMurray A."/>
            <person name="Milne S."/>
            <person name="Moore M.J.F."/>
            <person name="Nickerson T."/>
            <person name="Palmer S.A."/>
            <person name="Pearce A.V."/>
            <person name="Peck A.I."/>
            <person name="Pelan S."/>
            <person name="Phillimore B."/>
            <person name="Porter K.M."/>
            <person name="Rice C.M."/>
            <person name="Searle S."/>
            <person name="Sehra H.K."/>
            <person name="Shownkeen R."/>
            <person name="Skuce C.D."/>
            <person name="Smith M."/>
            <person name="Steward C.A."/>
            <person name="Sycamore N."/>
            <person name="Tester J."/>
            <person name="Thomas D.W."/>
            <person name="Tracey A."/>
            <person name="Tromans A."/>
            <person name="Tubby B."/>
            <person name="Wall M."/>
            <person name="Wallis J.M."/>
            <person name="West A.P."/>
            <person name="Whitehead S.L."/>
            <person name="Willey D.L."/>
            <person name="Wilming L."/>
            <person name="Wray P.W."/>
            <person name="Wright M.W."/>
            <person name="Young L."/>
            <person name="Coulson A."/>
            <person name="Durbin R.M."/>
            <person name="Hubbard T."/>
            <person name="Sulston J.E."/>
            <person name="Beck S."/>
            <person name="Bentley D.R."/>
            <person name="Rogers J."/>
            <person name="Ross M.T."/>
        </authorList>
    </citation>
    <scope>NUCLEOTIDE SEQUENCE [LARGE SCALE GENOMIC DNA]</scope>
</reference>
<reference key="4">
    <citation type="submission" date="2005-07" db="EMBL/GenBank/DDBJ databases">
        <authorList>
            <person name="Mural R.J."/>
            <person name="Istrail S."/>
            <person name="Sutton G.G."/>
            <person name="Florea L."/>
            <person name="Halpern A.L."/>
            <person name="Mobarry C.M."/>
            <person name="Lippert R."/>
            <person name="Walenz B."/>
            <person name="Shatkay H."/>
            <person name="Dew I."/>
            <person name="Miller J.R."/>
            <person name="Flanigan M.J."/>
            <person name="Edwards N.J."/>
            <person name="Bolanos R."/>
            <person name="Fasulo D."/>
            <person name="Halldorsson B.V."/>
            <person name="Hannenhalli S."/>
            <person name="Turner R."/>
            <person name="Yooseph S."/>
            <person name="Lu F."/>
            <person name="Nusskern D.R."/>
            <person name="Shue B.C."/>
            <person name="Zheng X.H."/>
            <person name="Zhong F."/>
            <person name="Delcher A.L."/>
            <person name="Huson D.H."/>
            <person name="Kravitz S.A."/>
            <person name="Mouchard L."/>
            <person name="Reinert K."/>
            <person name="Remington K.A."/>
            <person name="Clark A.G."/>
            <person name="Waterman M.S."/>
            <person name="Eichler E.E."/>
            <person name="Adams M.D."/>
            <person name="Hunkapiller M.W."/>
            <person name="Myers E.W."/>
            <person name="Venter J.C."/>
        </authorList>
    </citation>
    <scope>NUCLEOTIDE SEQUENCE [LARGE SCALE GENOMIC DNA]</scope>
</reference>
<reference key="5">
    <citation type="journal article" date="2004" name="Genome Res.">
        <title>The status, quality, and expansion of the NIH full-length cDNA project: the Mammalian Gene Collection (MGC).</title>
        <authorList>
            <consortium name="The MGC Project Team"/>
        </authorList>
    </citation>
    <scope>NUCLEOTIDE SEQUENCE [LARGE SCALE MRNA] (ISOFORM 1)</scope>
    <scope>VARIANT ILE-374</scope>
    <source>
        <tissue>Testis</tissue>
    </source>
</reference>
<reference key="6">
    <citation type="journal article" date="2007" name="Cell">
        <title>HEF1-dependent Aurora A activation induces disassembly of the primary cilium.</title>
        <authorList>
            <person name="Pugacheva E.N."/>
            <person name="Jablonski S.A."/>
            <person name="Hartman T.R."/>
            <person name="Henske E.P."/>
            <person name="Golemis E.A."/>
        </authorList>
    </citation>
    <scope>FUNCTION</scope>
    <scope>SUBCELLULAR LOCATION</scope>
</reference>
<reference key="7">
    <citation type="journal article" date="2017" name="Dev. Cell">
        <title>The CEP19-RABL2 GTPase complex binds IFT-B to initiate intraflagellar transport at the ciliary base.</title>
        <authorList>
            <person name="Kanie T."/>
            <person name="Abbott K.L."/>
            <person name="Mooney N.A."/>
            <person name="Plowey E.D."/>
            <person name="Demeter J."/>
            <person name="Jackson P.K."/>
        </authorList>
    </citation>
    <scope>SUBCELLULAR LOCATION</scope>
</reference>
<reference key="8">
    <citation type="journal article" date="2017" name="Mol. Biol. Cell">
        <title>RABL2 interacts with the intraflagellar transport-B complex and CEP19 and participates in ciliary assembly.</title>
        <authorList>
            <person name="Nishijima Y."/>
            <person name="Hagiya Y."/>
            <person name="Kubo T."/>
            <person name="Takei R."/>
            <person name="Katoh Y."/>
            <person name="Nakayama K."/>
        </authorList>
    </citation>
    <scope>SUBCELLULAR LOCATION</scope>
</reference>
<reference key="9">
    <citation type="journal article" date="2016" name="Sci. Rep.">
        <title>The serologically defined colon cancer antigen-3 (SDCCAG3) is involved in the regulation of ciliogenesis.</title>
        <authorList>
            <person name="Yu F."/>
            <person name="Sharma S."/>
            <person name="Skowronek A."/>
            <person name="Erdmann K.S."/>
        </authorList>
    </citation>
    <scope>INTERACTION WITH ENTR1</scope>
    <scope>SUBCELLULAR LOCATION</scope>
</reference>
<reference key="10">
    <citation type="journal article" date="2018" name="Am. J. Hum. Genet.">
        <title>Biallelic mutations in LRRC56, encoding a protein associated with intraflagellar transport, cause mucociliary clearance and laterality defects.</title>
        <authorList>
            <consortium name="Care4Rare Canada Consortium"/>
            <person name="Bonnefoy S."/>
            <person name="Watson C.M."/>
            <person name="Kernohan K.D."/>
            <person name="Lemos M."/>
            <person name="Hutchinson S."/>
            <person name="Poulter J.A."/>
            <person name="Crinnion L.A."/>
            <person name="Berry I."/>
            <person name="Simmonds J."/>
            <person name="Vasudevan P."/>
            <person name="O'Callaghan C."/>
            <person name="Hirst R.A."/>
            <person name="Rutman A."/>
            <person name="Huang L."/>
            <person name="Hartley T."/>
            <person name="Grynspan D."/>
            <person name="Moya E."/>
            <person name="Li C."/>
            <person name="Carr I.M."/>
            <person name="Bonthron D.T."/>
            <person name="Leroux M."/>
            <person name="Boycott K.M."/>
            <person name="Bastin P."/>
            <person name="Sheridan E.G."/>
        </authorList>
    </citation>
    <scope>INTERACTION WITH LRRC56</scope>
</reference>
<reference key="11">
    <citation type="journal article" date="2023" name="J. Cell Sci.">
        <title>CCDC66 regulates primary cilium length and signaling via interactions with transition zone and axonemal proteins.</title>
        <authorList>
            <person name="Odabasi E."/>
            <person name="Conkar D."/>
            <person name="Deretic J."/>
            <person name="Batman U."/>
            <person name="Frikstad K.M."/>
            <person name="Patzke S."/>
            <person name="Firat-Karalar E.N."/>
        </authorList>
    </citation>
    <scope>SUBCELLULAR LOCATION</scope>
</reference>
<keyword id="KW-0025">Alternative splicing</keyword>
<keyword id="KW-0966">Cell projection</keyword>
<keyword id="KW-0969">Cilium</keyword>
<keyword id="KW-0970">Cilium biogenesis/degradation</keyword>
<keyword id="KW-0963">Cytoplasm</keyword>
<keyword id="KW-0206">Cytoskeleton</keyword>
<keyword id="KW-0282">Flagellum</keyword>
<keyword id="KW-1267">Proteomics identification</keyword>
<keyword id="KW-1185">Reference proteome</keyword>
<keyword id="KW-0677">Repeat</keyword>
<keyword id="KW-0802">TPR repeat</keyword>
<dbReference type="EMBL" id="U20362">
    <property type="protein sequence ID" value="AAA86720.1"/>
    <property type="molecule type" value="mRNA"/>
</dbReference>
<dbReference type="EMBL" id="AK300769">
    <property type="protein sequence ID" value="BAG62434.1"/>
    <property type="molecule type" value="mRNA"/>
</dbReference>
<dbReference type="EMBL" id="AL161772">
    <property type="status" value="NOT_ANNOTATED_CDS"/>
    <property type="molecule type" value="Genomic_DNA"/>
</dbReference>
<dbReference type="EMBL" id="AL590096">
    <property type="status" value="NOT_ANNOTATED_CDS"/>
    <property type="molecule type" value="Genomic_DNA"/>
</dbReference>
<dbReference type="EMBL" id="CH471075">
    <property type="protein sequence ID" value="EAX08272.1"/>
    <property type="molecule type" value="Genomic_DNA"/>
</dbReference>
<dbReference type="EMBL" id="BC030776">
    <property type="protein sequence ID" value="AAH30776.2"/>
    <property type="molecule type" value="mRNA"/>
</dbReference>
<dbReference type="CCDS" id="CCDS31944.1">
    <molecule id="Q13099-1"/>
</dbReference>
<dbReference type="CCDS" id="CCDS31945.1">
    <molecule id="Q13099-2"/>
</dbReference>
<dbReference type="RefSeq" id="NP_001305420.1">
    <property type="nucleotide sequence ID" value="NM_001318491.1"/>
</dbReference>
<dbReference type="RefSeq" id="NP_001305422.1">
    <molecule id="Q13099-1"/>
    <property type="nucleotide sequence ID" value="NM_001318493.2"/>
</dbReference>
<dbReference type="RefSeq" id="NP_001340494.1">
    <molecule id="Q13099-1"/>
    <property type="nucleotide sequence ID" value="NM_001353565.2"/>
</dbReference>
<dbReference type="RefSeq" id="NP_001340495.1">
    <molecule id="Q13099-1"/>
    <property type="nucleotide sequence ID" value="NM_001353566.2"/>
</dbReference>
<dbReference type="RefSeq" id="NP_001340496.1">
    <molecule id="Q13099-1"/>
    <property type="nucleotide sequence ID" value="NM_001353567.2"/>
</dbReference>
<dbReference type="RefSeq" id="NP_001340497.1">
    <molecule id="Q13099-2"/>
    <property type="nucleotide sequence ID" value="NM_001353568.2"/>
</dbReference>
<dbReference type="RefSeq" id="NP_006522.2">
    <molecule id="Q13099-2"/>
    <property type="nucleotide sequence ID" value="NM_006531.4"/>
</dbReference>
<dbReference type="RefSeq" id="NP_783195.2">
    <molecule id="Q13099-1"/>
    <property type="nucleotide sequence ID" value="NM_175605.4"/>
</dbReference>
<dbReference type="RefSeq" id="XP_005266610.1">
    <property type="nucleotide sequence ID" value="XM_005266553.2"/>
</dbReference>
<dbReference type="RefSeq" id="XP_006719933.1">
    <molecule id="Q13099-2"/>
    <property type="nucleotide sequence ID" value="XM_006719870.4"/>
</dbReference>
<dbReference type="RefSeq" id="XP_011533543.1">
    <property type="nucleotide sequence ID" value="XM_011535241.2"/>
</dbReference>
<dbReference type="RefSeq" id="XP_011533544.1">
    <property type="nucleotide sequence ID" value="XM_011535242.1"/>
</dbReference>
<dbReference type="RefSeq" id="XP_011533545.1">
    <property type="nucleotide sequence ID" value="XM_011535243.1"/>
</dbReference>
<dbReference type="RefSeq" id="XP_016876246.1">
    <molecule id="Q13099-2"/>
    <property type="nucleotide sequence ID" value="XM_017020757.2"/>
</dbReference>
<dbReference type="RefSeq" id="XP_016876247.1">
    <property type="nucleotide sequence ID" value="XM_017020758.1"/>
</dbReference>
<dbReference type="RefSeq" id="XP_047286611.1">
    <molecule id="Q13099-2"/>
    <property type="nucleotide sequence ID" value="XM_047430655.1"/>
</dbReference>
<dbReference type="RefSeq" id="XP_047286612.1">
    <molecule id="Q13099-3"/>
    <property type="nucleotide sequence ID" value="XM_047430656.1"/>
</dbReference>
<dbReference type="RefSeq" id="XP_047286613.1">
    <molecule id="Q13099-3"/>
    <property type="nucleotide sequence ID" value="XM_047430657.1"/>
</dbReference>
<dbReference type="SMR" id="Q13099"/>
<dbReference type="BioGRID" id="113771">
    <property type="interactions" value="58"/>
</dbReference>
<dbReference type="ComplexPortal" id="CPX-5022">
    <property type="entry name" value="Intraflagellar transport complex B"/>
</dbReference>
<dbReference type="CORUM" id="Q13099"/>
<dbReference type="FunCoup" id="Q13099">
    <property type="interactions" value="674"/>
</dbReference>
<dbReference type="IntAct" id="Q13099">
    <property type="interactions" value="59"/>
</dbReference>
<dbReference type="MINT" id="Q13099"/>
<dbReference type="STRING" id="9606.ENSP00000323580"/>
<dbReference type="TCDB" id="1.X.1.1.1">
    <property type="family name" value="the intraflagellar transporter-a complex (ift-a) family"/>
</dbReference>
<dbReference type="iPTMnet" id="Q13099"/>
<dbReference type="PhosphoSitePlus" id="Q13099"/>
<dbReference type="BioMuta" id="IFT88"/>
<dbReference type="DMDM" id="206729873"/>
<dbReference type="jPOST" id="Q13099"/>
<dbReference type="MassIVE" id="Q13099"/>
<dbReference type="PaxDb" id="9606-ENSP00000323580"/>
<dbReference type="PeptideAtlas" id="Q13099"/>
<dbReference type="ProteomicsDB" id="59151">
    <molecule id="Q13099-1"/>
</dbReference>
<dbReference type="ProteomicsDB" id="59152">
    <molecule id="Q13099-2"/>
</dbReference>
<dbReference type="ProteomicsDB" id="59153">
    <molecule id="Q13099-3"/>
</dbReference>
<dbReference type="Pumba" id="Q13099"/>
<dbReference type="Antibodypedia" id="22319">
    <property type="antibodies" value="255 antibodies from 28 providers"/>
</dbReference>
<dbReference type="DNASU" id="8100"/>
<dbReference type="Ensembl" id="ENST00000319980.10">
    <molecule id="Q13099-1"/>
    <property type="protein sequence ID" value="ENSP00000323580.6"/>
    <property type="gene ID" value="ENSG00000032742.18"/>
</dbReference>
<dbReference type="Ensembl" id="ENST00000351808.10">
    <molecule id="Q13099-2"/>
    <property type="protein sequence ID" value="ENSP00000261632.5"/>
    <property type="gene ID" value="ENSG00000032742.18"/>
</dbReference>
<dbReference type="GeneID" id="8100"/>
<dbReference type="KEGG" id="hsa:8100"/>
<dbReference type="MANE-Select" id="ENST00000351808.10">
    <property type="protein sequence ID" value="ENSP00000261632.5"/>
    <property type="RefSeq nucleotide sequence ID" value="NM_006531.5"/>
    <property type="RefSeq protein sequence ID" value="NP_006522.2"/>
</dbReference>
<dbReference type="UCSC" id="uc001unh.4">
    <molecule id="Q13099-2"/>
    <property type="organism name" value="human"/>
</dbReference>
<dbReference type="AGR" id="HGNC:20606"/>
<dbReference type="CTD" id="8100"/>
<dbReference type="DisGeNET" id="8100"/>
<dbReference type="GeneCards" id="IFT88"/>
<dbReference type="HGNC" id="HGNC:20606">
    <property type="gene designation" value="IFT88"/>
</dbReference>
<dbReference type="HPA" id="ENSG00000032742">
    <property type="expression patterns" value="Tissue enhanced (testis)"/>
</dbReference>
<dbReference type="MalaCards" id="IFT88"/>
<dbReference type="MIM" id="600595">
    <property type="type" value="gene"/>
</dbReference>
<dbReference type="neXtProt" id="NX_Q13099"/>
<dbReference type="OpenTargets" id="ENSG00000032742"/>
<dbReference type="Orphanet" id="791">
    <property type="disease" value="Retinitis pigmentosa"/>
</dbReference>
<dbReference type="PharmGKB" id="PA134991804"/>
<dbReference type="VEuPathDB" id="HostDB:ENSG00000032742"/>
<dbReference type="eggNOG" id="KOG2003">
    <property type="taxonomic scope" value="Eukaryota"/>
</dbReference>
<dbReference type="GeneTree" id="ENSGT00390000015473"/>
<dbReference type="HOGENOM" id="CLU_010738_1_0_1"/>
<dbReference type="InParanoid" id="Q13099"/>
<dbReference type="OMA" id="RIKIMHN"/>
<dbReference type="OrthoDB" id="1926212at2759"/>
<dbReference type="PAN-GO" id="Q13099">
    <property type="GO annotations" value="9 GO annotations based on evolutionary models"/>
</dbReference>
<dbReference type="PhylomeDB" id="Q13099"/>
<dbReference type="TreeFam" id="TF313218"/>
<dbReference type="PathwayCommons" id="Q13099"/>
<dbReference type="Reactome" id="R-HSA-5610787">
    <property type="pathway name" value="Hedgehog 'off' state"/>
</dbReference>
<dbReference type="Reactome" id="R-HSA-5620924">
    <property type="pathway name" value="Intraflagellar transport"/>
</dbReference>
<dbReference type="Reactome" id="R-HSA-9613829">
    <property type="pathway name" value="Chaperone Mediated Autophagy"/>
</dbReference>
<dbReference type="Reactome" id="R-HSA-9615710">
    <property type="pathway name" value="Late endosomal microautophagy"/>
</dbReference>
<dbReference type="Reactome" id="R-HSA-9646399">
    <property type="pathway name" value="Aggrephagy"/>
</dbReference>
<dbReference type="SignaLink" id="Q13099"/>
<dbReference type="SIGNOR" id="Q13099"/>
<dbReference type="BioGRID-ORCS" id="8100">
    <property type="hits" value="12 hits in 1157 CRISPR screens"/>
</dbReference>
<dbReference type="CD-CODE" id="8C2F96ED">
    <property type="entry name" value="Centrosome"/>
</dbReference>
<dbReference type="ChiTaRS" id="IFT88">
    <property type="organism name" value="human"/>
</dbReference>
<dbReference type="GeneWiki" id="IFT88"/>
<dbReference type="GenomeRNAi" id="8100"/>
<dbReference type="Pharos" id="Q13099">
    <property type="development level" value="Tbio"/>
</dbReference>
<dbReference type="PRO" id="PR:Q13099"/>
<dbReference type="Proteomes" id="UP000005640">
    <property type="component" value="Chromosome 13"/>
</dbReference>
<dbReference type="RNAct" id="Q13099">
    <property type="molecule type" value="protein"/>
</dbReference>
<dbReference type="Bgee" id="ENSG00000032742">
    <property type="expression patterns" value="Expressed in bronchial epithelial cell and 202 other cell types or tissues"/>
</dbReference>
<dbReference type="ExpressionAtlas" id="Q13099">
    <property type="expression patterns" value="baseline and differential"/>
</dbReference>
<dbReference type="GO" id="GO:0034451">
    <property type="term" value="C:centriolar satellite"/>
    <property type="evidence" value="ECO:0000314"/>
    <property type="project" value="HPA"/>
</dbReference>
<dbReference type="GO" id="GO:0005814">
    <property type="term" value="C:centriole"/>
    <property type="evidence" value="ECO:0000314"/>
    <property type="project" value="UniProtKB"/>
</dbReference>
<dbReference type="GO" id="GO:0005813">
    <property type="term" value="C:centrosome"/>
    <property type="evidence" value="ECO:0000314"/>
    <property type="project" value="UniProtKB"/>
</dbReference>
<dbReference type="GO" id="GO:0036064">
    <property type="term" value="C:ciliary basal body"/>
    <property type="evidence" value="ECO:0000314"/>
    <property type="project" value="HPA"/>
</dbReference>
<dbReference type="GO" id="GO:0097546">
    <property type="term" value="C:ciliary base"/>
    <property type="evidence" value="ECO:0000318"/>
    <property type="project" value="GO_Central"/>
</dbReference>
<dbReference type="GO" id="GO:0097542">
    <property type="term" value="C:ciliary tip"/>
    <property type="evidence" value="ECO:0000304"/>
    <property type="project" value="Reactome"/>
</dbReference>
<dbReference type="GO" id="GO:0005929">
    <property type="term" value="C:cilium"/>
    <property type="evidence" value="ECO:0000314"/>
    <property type="project" value="HPA"/>
</dbReference>
<dbReference type="GO" id="GO:0005829">
    <property type="term" value="C:cytosol"/>
    <property type="evidence" value="ECO:0000314"/>
    <property type="project" value="HPA"/>
</dbReference>
<dbReference type="GO" id="GO:0045171">
    <property type="term" value="C:intercellular bridge"/>
    <property type="evidence" value="ECO:0000314"/>
    <property type="project" value="HPA"/>
</dbReference>
<dbReference type="GO" id="GO:0030992">
    <property type="term" value="C:intraciliary transport particle B"/>
    <property type="evidence" value="ECO:0000353"/>
    <property type="project" value="ComplexPortal"/>
</dbReference>
<dbReference type="GO" id="GO:0002177">
    <property type="term" value="C:manchette"/>
    <property type="evidence" value="ECO:0000250"/>
    <property type="project" value="UniProtKB"/>
</dbReference>
<dbReference type="GO" id="GO:0015630">
    <property type="term" value="C:microtubule cytoskeleton"/>
    <property type="evidence" value="ECO:0000314"/>
    <property type="project" value="HPA"/>
</dbReference>
<dbReference type="GO" id="GO:0072686">
    <property type="term" value="C:mitotic spindle"/>
    <property type="evidence" value="ECO:0000314"/>
    <property type="project" value="HPA"/>
</dbReference>
<dbReference type="GO" id="GO:0031514">
    <property type="term" value="C:motile cilium"/>
    <property type="evidence" value="ECO:0000250"/>
    <property type="project" value="BHF-UCL"/>
</dbReference>
<dbReference type="GO" id="GO:0097730">
    <property type="term" value="C:non-motile cilium"/>
    <property type="evidence" value="ECO:0000318"/>
    <property type="project" value="GO_Central"/>
</dbReference>
<dbReference type="GO" id="GO:0005730">
    <property type="term" value="C:nucleolus"/>
    <property type="evidence" value="ECO:0000314"/>
    <property type="project" value="HPA"/>
</dbReference>
<dbReference type="GO" id="GO:0036126">
    <property type="term" value="C:sperm flagellum"/>
    <property type="evidence" value="ECO:0000250"/>
    <property type="project" value="UniProtKB"/>
</dbReference>
<dbReference type="GO" id="GO:0120212">
    <property type="term" value="C:sperm head-tail coupling apparatus"/>
    <property type="evidence" value="ECO:0000250"/>
    <property type="project" value="UniProtKB"/>
</dbReference>
<dbReference type="GO" id="GO:0019894">
    <property type="term" value="F:kinesin binding"/>
    <property type="evidence" value="ECO:0000318"/>
    <property type="project" value="GO_Central"/>
</dbReference>
<dbReference type="GO" id="GO:0060271">
    <property type="term" value="P:cilium assembly"/>
    <property type="evidence" value="ECO:0000250"/>
    <property type="project" value="UniProtKB"/>
</dbReference>
<dbReference type="GO" id="GO:0035720">
    <property type="term" value="P:intraciliary anterograde transport"/>
    <property type="evidence" value="ECO:0000303"/>
    <property type="project" value="ComplexPortal"/>
</dbReference>
<dbReference type="GO" id="GO:0045724">
    <property type="term" value="P:positive regulation of cilium assembly"/>
    <property type="evidence" value="ECO:0000315"/>
    <property type="project" value="UniProtKB"/>
</dbReference>
<dbReference type="GO" id="GO:2000785">
    <property type="term" value="P:regulation of autophagosome assembly"/>
    <property type="evidence" value="ECO:0000250"/>
    <property type="project" value="UniProtKB"/>
</dbReference>
<dbReference type="GO" id="GO:1902017">
    <property type="term" value="P:regulation of cilium assembly"/>
    <property type="evidence" value="ECO:0000250"/>
    <property type="project" value="UniProtKB"/>
</dbReference>
<dbReference type="GO" id="GO:0034021">
    <property type="term" value="P:response to silicon dioxide"/>
    <property type="evidence" value="ECO:0007669"/>
    <property type="project" value="Ensembl"/>
</dbReference>
<dbReference type="FunFam" id="1.25.40.10:FF:000358">
    <property type="entry name" value="Intraflagellar transport protein 88 homolog"/>
    <property type="match status" value="1"/>
</dbReference>
<dbReference type="FunFam" id="1.25.40.10:FF:000359">
    <property type="entry name" value="Intraflagellar transport protein 88 homolog"/>
    <property type="match status" value="1"/>
</dbReference>
<dbReference type="FunFam" id="1.25.40.10:FF:000135">
    <property type="entry name" value="intraflagellar transport protein 88 homolog isoform X1"/>
    <property type="match status" value="1"/>
</dbReference>
<dbReference type="Gene3D" id="1.25.40.10">
    <property type="entry name" value="Tetratricopeptide repeat domain"/>
    <property type="match status" value="3"/>
</dbReference>
<dbReference type="InterPro" id="IPR006597">
    <property type="entry name" value="Sel1-like"/>
</dbReference>
<dbReference type="InterPro" id="IPR011990">
    <property type="entry name" value="TPR-like_helical_dom_sf"/>
</dbReference>
<dbReference type="InterPro" id="IPR019734">
    <property type="entry name" value="TPR_rpt"/>
</dbReference>
<dbReference type="PANTHER" id="PTHR44117">
    <property type="entry name" value="INTRAFLAGELLAR TRANSPORT PROTEIN 88 HOMOLOG"/>
    <property type="match status" value="1"/>
</dbReference>
<dbReference type="PANTHER" id="PTHR44117:SF1">
    <property type="entry name" value="INTRAFLAGELLAR TRANSPORT PROTEIN 88 HOMOLOG"/>
    <property type="match status" value="1"/>
</dbReference>
<dbReference type="Pfam" id="PF13424">
    <property type="entry name" value="TPR_12"/>
    <property type="match status" value="1"/>
</dbReference>
<dbReference type="Pfam" id="PF13432">
    <property type="entry name" value="TPR_16"/>
    <property type="match status" value="1"/>
</dbReference>
<dbReference type="Pfam" id="PF13174">
    <property type="entry name" value="TPR_6"/>
    <property type="match status" value="2"/>
</dbReference>
<dbReference type="Pfam" id="PF13181">
    <property type="entry name" value="TPR_8"/>
    <property type="match status" value="1"/>
</dbReference>
<dbReference type="SMART" id="SM00671">
    <property type="entry name" value="SEL1"/>
    <property type="match status" value="4"/>
</dbReference>
<dbReference type="SMART" id="SM00028">
    <property type="entry name" value="TPR"/>
    <property type="match status" value="11"/>
</dbReference>
<dbReference type="SUPFAM" id="SSF48452">
    <property type="entry name" value="TPR-like"/>
    <property type="match status" value="2"/>
</dbReference>
<dbReference type="PROSITE" id="PS50005">
    <property type="entry name" value="TPR"/>
    <property type="match status" value="9"/>
</dbReference>
<dbReference type="PROSITE" id="PS50293">
    <property type="entry name" value="TPR_REGION"/>
    <property type="match status" value="2"/>
</dbReference>
<comment type="function">
    <text evidence="1 4">Positively regulates primary cilium biogenesis (PubMed:17604723). Also involved in autophagy since it is required for trafficking of ATG16L and the expansion of the autophagic compartment.</text>
</comment>
<comment type="subunit">
    <text evidence="1 5 8">Component of the IFT complex B, at least composed of IFT20, IFT22, IFT25, IFT27, IFT46, IFT52, TRAF3IP1/IFT54, IFT57, IFT74, IFT80, IFT81, and IFT88 (By similarity). Interacts with IFT20, IFT22, IFT25, IFT27, IFT52, TRAF3IP1, IFT74, IFT80 and IFT81 (By similarity). Interacts with IFT172 (By similarity). Interacts with IFT57 (By similarity). Interacts with IFT46 (By similarity). Interacts with IFT70B (By similarity). Interacts with C2CD3 (By similarity). Interacts with ENTR1 (via N-terminus) (PubMed:27767179). Interacts with LRRC56 (PubMed:30388400). Interacts with DZIP1 (By similarity). Interacts with CCDC38 (By similarity). Interacts with CCDC146 (By similarity). Interacts with CFAP53 (By similarity).</text>
</comment>
<comment type="interaction">
    <interactant intactId="EBI-347427">
        <id>Q13099</id>
    </interactant>
    <interactant intactId="EBI-1765641">
        <id>Q9Y6W3</id>
        <label>CAPN7</label>
    </interactant>
    <organismsDiffer>false</organismsDiffer>
    <experiments>3</experiments>
</comment>
<comment type="interaction">
    <interactant intactId="EBI-347427">
        <id>Q13099</id>
    </interactant>
    <interactant intactId="EBI-744556">
        <id>Q96HB5</id>
        <label>CCDC120</label>
    </interactant>
    <organismsDiffer>false</organismsDiffer>
    <experiments>3</experiments>
</comment>
<comment type="interaction">
    <interactant intactId="EBI-347427">
        <id>Q13099</id>
    </interactant>
    <interactant intactId="EBI-747840">
        <id>Q96G04</id>
        <label>EEF2KMT</label>
    </interactant>
    <organismsDiffer>false</organismsDiffer>
    <experiments>3</experiments>
</comment>
<comment type="interaction">
    <interactant intactId="EBI-347427">
        <id>Q13099</id>
    </interactant>
    <interactant intactId="EBI-12112376">
        <id>A0A0C4DGQ7</id>
        <label>EML2</label>
    </interactant>
    <organismsDiffer>false</organismsDiffer>
    <experiments>3</experiments>
</comment>
<comment type="interaction">
    <interactant intactId="EBI-347427">
        <id>Q13099</id>
    </interactant>
    <interactant intactId="EBI-751388">
        <id>P27987</id>
        <label>ITPKB</label>
    </interactant>
    <organismsDiffer>false</organismsDiffer>
    <experiments>3</experiments>
</comment>
<comment type="interaction">
    <interactant intactId="EBI-347427">
        <id>Q13099</id>
    </interactant>
    <interactant intactId="EBI-12330065">
        <id>Q9NZV6</id>
        <label>MSRB1</label>
    </interactant>
    <organismsDiffer>false</organismsDiffer>
    <experiments>3</experiments>
</comment>
<comment type="interaction">
    <interactant intactId="EBI-347427">
        <id>Q13099</id>
    </interactant>
    <interactant intactId="EBI-455078">
        <id>Q969G3</id>
        <label>SMARCE1</label>
    </interactant>
    <organismsDiffer>false</organismsDiffer>
    <experiments>3</experiments>
</comment>
<comment type="subcellular location">
    <subcellularLocation>
        <location evidence="1">Cytoplasm</location>
        <location evidence="1">Cytoskeleton</location>
        <location evidence="1">Microtubule organizing center</location>
        <location evidence="1">Centrosome</location>
        <location evidence="1">Centriole</location>
    </subcellularLocation>
    <subcellularLocation>
        <location evidence="4 6">Cell projection</location>
        <location evidence="4 6">Cilium</location>
    </subcellularLocation>
    <subcellularLocation>
        <location evidence="4 5 6 7 9">Cytoplasm</location>
        <location evidence="4 5 6 7 9">Cytoskeleton</location>
        <location evidence="4 5 6 7 9">Cilium basal body</location>
    </subcellularLocation>
    <subcellularLocation>
        <location evidence="5">Cytoplasm</location>
        <location evidence="5">Cytoskeleton</location>
        <location evidence="5">Microtubule organizing center</location>
        <location evidence="5">Centrosome</location>
    </subcellularLocation>
    <subcellularLocation>
        <location evidence="1">Cytoplasm</location>
    </subcellularLocation>
    <subcellularLocation>
        <location evidence="1">Cell projection</location>
        <location evidence="1">Cilium</location>
        <location evidence="1">Flagellum</location>
    </subcellularLocation>
    <subcellularLocation>
        <location evidence="1">Cytoplasm</location>
        <location evidence="1">Cytoskeleton</location>
    </subcellularLocation>
    <text evidence="1 5">Colocalizes with ENTR1 and gamma-tubulin at the basal body of primary cilia (PubMed:27767179). Colocalizes with ENTR1 and pericentrin at the centrosome (PubMed:27767179). In sperm cells, localizes to the manchette, head-tail coupling apparatus and flagellum (By similarity).</text>
</comment>
<comment type="alternative products">
    <event type="alternative splicing"/>
    <isoform>
        <id>Q13099-2</id>
        <name>2</name>
        <sequence type="displayed"/>
    </isoform>
    <isoform>
        <id>Q13099-1</id>
        <name>1</name>
        <sequence type="described" ref="VSP_060641"/>
    </isoform>
    <isoform>
        <id>Q13099-3</id>
        <name>3</name>
        <sequence type="described" ref="VSP_060641 VSP_060642"/>
    </isoform>
</comment>
<comment type="tissue specificity">
    <text evidence="10">Expressed in the heart, brain, liver, lung, kidney, skeletal muscle and pancreas.</text>
</comment>
<sequence length="824" mass="93192">MMQNVHLAPETDEDDLYSGYNDYNPIYDIEELENDAAFQQAVRTSHGRRPPITAKISSTAVTRPIATGYGSKTSLASSIGRPMTGAIQDGVTRPMTAVRAAGFTKAALRGSAFDPLSQSRGPASPLEAKKKDSPEEKIKQLEKEVNELVEESCIANSCGDLKLALEKAKDAGRKERVLVRQREQVTTPENINLDLTYSVLFNLASQYSVNEMYAEALNTYQVIVKNKMFSNAGILKMNMGNIYLKQRNYSKAIKFYRMALDQVPSVNKQMRIKIMQNIGVTFIQAGQYSDAINSYEHIMSMAPNLKAGYNLTICYFAIGDREKMKKAFQKLITVPLEIDEDKYISPSDDPHTNLVTEAIKNDHLRQMERERKAMAEKYIMTSAKLIAPVIETSFAAGYDWCVEVVKASQYVELANDLEINKAVTYLRQKDYNQAVEILKVLEKKDSRVKSAAATNLSALYYMGKDFAQASSYADIAVNSDRYNPAALTNKGNTVFANGDYEKAAEFYKEALRNDSSCTEALYNIGLTYEKLNRLDEALDCFLKLHAILRNSAEVLYQIANIYELMENPSQAIEWLMQVVSVIPTDPQVLSKLGELYDREGDKSQAFQYYYESYRYFPCNIEVIEWLGAYYIDTQFWEKAIQYFERASLIQPTQVKWQLMVASCFRRSGNYQKALDTYKDTHRKFPENVECLRFLVRLCTDLGLKDAQEYARKLKRLEKMKEIREQRIKSGRDGSGGSRGKREGSASGDSGQNYSASSKGERLSARLRALPGTNEPYESSSNKEIDASYVDPLGPQIERPKTAAKKRIDEDDFADEELGDDLLPE</sequence>
<organism>
    <name type="scientific">Homo sapiens</name>
    <name type="common">Human</name>
    <dbReference type="NCBI Taxonomy" id="9606"/>
    <lineage>
        <taxon>Eukaryota</taxon>
        <taxon>Metazoa</taxon>
        <taxon>Chordata</taxon>
        <taxon>Craniata</taxon>
        <taxon>Vertebrata</taxon>
        <taxon>Euteleostomi</taxon>
        <taxon>Mammalia</taxon>
        <taxon>Eutheria</taxon>
        <taxon>Euarchontoglires</taxon>
        <taxon>Primates</taxon>
        <taxon>Haplorrhini</taxon>
        <taxon>Catarrhini</taxon>
        <taxon>Hominidae</taxon>
        <taxon>Homo</taxon>
    </lineage>
</organism>
<proteinExistence type="evidence at protein level"/>
<feature type="chain" id="PRO_0000106391" description="Intraflagellar transport protein 88 homolog">
    <location>
        <begin position="1"/>
        <end position="824"/>
    </location>
</feature>
<feature type="repeat" description="TPR 1">
    <location>
        <begin position="197"/>
        <end position="230"/>
    </location>
</feature>
<feature type="repeat" description="TPR 2">
    <location>
        <begin position="233"/>
        <end position="266"/>
    </location>
</feature>
<feature type="repeat" description="TPR 3">
    <location>
        <begin position="272"/>
        <end position="305"/>
    </location>
</feature>
<feature type="repeat" description="TPR 4">
    <location>
        <begin position="307"/>
        <end position="338"/>
    </location>
</feature>
<feature type="repeat" description="TPR 5">
    <location>
        <begin position="415"/>
        <end position="448"/>
    </location>
</feature>
<feature type="repeat" description="TPR 6">
    <location>
        <begin position="450"/>
        <end position="483"/>
    </location>
</feature>
<feature type="repeat" description="TPR 7">
    <location>
        <begin position="484"/>
        <end position="517"/>
    </location>
</feature>
<feature type="repeat" description="TPR 8">
    <location>
        <begin position="518"/>
        <end position="551"/>
    </location>
</feature>
<feature type="repeat" description="TPR 9">
    <location>
        <begin position="552"/>
        <end position="585"/>
    </location>
</feature>
<feature type="repeat" description="TPR 10">
    <location>
        <begin position="586"/>
        <end position="619"/>
    </location>
</feature>
<feature type="repeat" description="TPR 11">
    <location>
        <begin position="620"/>
        <end position="653"/>
    </location>
</feature>
<feature type="repeat" description="TPR 12">
    <location>
        <begin position="654"/>
        <end position="687"/>
    </location>
</feature>
<feature type="region of interest" description="Disordered" evidence="2">
    <location>
        <begin position="113"/>
        <end position="134"/>
    </location>
</feature>
<feature type="region of interest" description="Disordered" evidence="2">
    <location>
        <begin position="724"/>
        <end position="824"/>
    </location>
</feature>
<feature type="compositionally biased region" description="Polar residues" evidence="2">
    <location>
        <begin position="748"/>
        <end position="757"/>
    </location>
</feature>
<feature type="compositionally biased region" description="Basic and acidic residues" evidence="2">
    <location>
        <begin position="797"/>
        <end position="808"/>
    </location>
</feature>
<feature type="compositionally biased region" description="Acidic residues" evidence="2">
    <location>
        <begin position="809"/>
        <end position="824"/>
    </location>
</feature>
<feature type="splice variant" id="VSP_060641" description="In isoform 1 and isoform 3.">
    <original>M</original>
    <variation>MKFTNTKVQM</variation>
    <location>
        <position position="1"/>
    </location>
</feature>
<feature type="splice variant" id="VSP_060642" description="In isoform 3.">
    <location>
        <begin position="52"/>
        <end position="70"/>
    </location>
</feature>
<feature type="sequence variant" id="VAR_046464" description="In dbSNP:rs2442455." evidence="3">
    <original>M</original>
    <variation>I</variation>
    <location>
        <position position="374"/>
    </location>
</feature>
<feature type="sequence variant" id="VAR_046465" description="In dbSNP:rs9509307." evidence="10">
    <original>S</original>
    <variation>N</variation>
    <location>
        <position position="446"/>
    </location>
</feature>
<feature type="sequence variant" id="VAR_046466" description="In dbSNP:rs9552254.">
    <original>S</original>
    <variation>G</variation>
    <location>
        <position position="662"/>
    </location>
</feature>
<feature type="sequence conflict" description="In Ref. 1; AAA86720." evidence="11" ref="1">
    <original>F</original>
    <variation>S</variation>
    <location>
        <position position="201"/>
    </location>
</feature>
<feature type="sequence conflict" description="In Ref. 5; AAH30776." evidence="11" ref="5">
    <original>K</original>
    <variation>E</variation>
    <location>
        <position position="326"/>
    </location>
</feature>
<feature type="sequence conflict" description="In Ref. 5; AAH30776." evidence="11" ref="5">
    <original>I</original>
    <variation>V</variation>
    <location>
        <position position="379"/>
    </location>
</feature>
<feature type="sequence conflict" description="In Ref. 1; AAA86720." evidence="11" ref="1">
    <original>M</original>
    <variation>T</variation>
    <location>
        <position position="380"/>
    </location>
</feature>
<feature type="sequence conflict" description="In Ref. 1; AAA86720." evidence="11" ref="1">
    <original>Y</original>
    <variation>C</variation>
    <location>
        <position position="398"/>
    </location>
</feature>
<feature type="sequence conflict" description="In Ref. 5; AAH30776." evidence="11" ref="5">
    <original>E</original>
    <variation>G</variation>
    <location>
        <position position="599"/>
    </location>
</feature>
<evidence type="ECO:0000250" key="1">
    <source>
        <dbReference type="UniProtKB" id="Q61371"/>
    </source>
</evidence>
<evidence type="ECO:0000256" key="2">
    <source>
        <dbReference type="SAM" id="MobiDB-lite"/>
    </source>
</evidence>
<evidence type="ECO:0000269" key="3">
    <source>
    </source>
</evidence>
<evidence type="ECO:0000269" key="4">
    <source>
    </source>
</evidence>
<evidence type="ECO:0000269" key="5">
    <source>
    </source>
</evidence>
<evidence type="ECO:0000269" key="6">
    <source>
    </source>
</evidence>
<evidence type="ECO:0000269" key="7">
    <source>
    </source>
</evidence>
<evidence type="ECO:0000269" key="8">
    <source>
    </source>
</evidence>
<evidence type="ECO:0000269" key="9">
    <source>
    </source>
</evidence>
<evidence type="ECO:0000269" key="10">
    <source>
    </source>
</evidence>
<evidence type="ECO:0000305" key="11"/>
<accession>Q13099</accession>
<accession>A2A491</accession>
<accession>B4DUS2</accession>
<accession>Q5SZJ6</accession>
<accession>Q8N719</accession>
<name>IFT88_HUMAN</name>